<comment type="function">
    <text evidence="1">The surface protein (SU) attaches the virus to the host cell by binding to its receptor. This interaction triggers the refolding of the transmembrane protein (TM) and is thought to activate its fusogenic potential by unmasking its fusion peptide. Fusion occurs at the host cell plasma membrane (By similarity).</text>
</comment>
<comment type="function">
    <text evidence="1">The transmembrane protein (TM) acts as a class I viral fusion protein. Under the current model, the protein has at least 3 conformational states: pre-fusion native state, pre-hairpin intermediate state, and post-fusion hairpin state. During viral and target cell membrane fusion, the coiled coil regions (heptad repeats) assume a trimer-of-hairpins structure, positioning the fusion peptide in close proximity to the C-terminal region of the ectodomain. The formation of this structure appears to drive apposition and subsequent fusion of viral and target cell membranes. Membranes fusion leads to delivery of the nucleocapsid into the cytoplasm (By similarity).</text>
</comment>
<comment type="subunit">
    <text evidence="1">The mature envelope protein (Env) consists of a trimer of SU-TM heterodimers attached by a labile interchain disulfide bond.</text>
</comment>
<comment type="subcellular location">
    <molecule>Transmembrane protein</molecule>
    <subcellularLocation>
        <location evidence="1">Virion membrane</location>
        <topology evidence="1">Single-pass type I membrane protein</topology>
    </subcellularLocation>
    <subcellularLocation>
        <location evidence="1">Host cell membrane</location>
        <topology evidence="1">Single-pass type I membrane protein</topology>
    </subcellularLocation>
</comment>
<comment type="subcellular location">
    <molecule>Surface protein</molecule>
    <subcellularLocation>
        <location>Virion membrane</location>
        <topology>Peripheral membrane protein</topology>
    </subcellularLocation>
    <subcellularLocation>
        <location evidence="1">Host cell membrane</location>
        <topology evidence="1">Peripheral membrane protein</topology>
    </subcellularLocation>
    <text evidence="1">The surface protein is not anchored to the viral envelope, but associates with the extravirion surface through its binding to TM. Both proteins are thought to be concentrated at the site of budding and incorporated into the virions possibly by contacts between the cytoplasmic tail of Env and the N-terminus of Gag (By similarity).</text>
</comment>
<comment type="subcellular location">
    <molecule>R-peptide</molecule>
    <subcellularLocation>
        <location evidence="1">Host cell membrane</location>
        <topology evidence="1">Peripheral membrane protein</topology>
    </subcellularLocation>
    <text evidence="1">The R-peptide is membrane-associated through its palmitate.</text>
</comment>
<comment type="domain">
    <text evidence="1">The 17 amino acids long immunosuppressive region is present in many retroviral envelope proteins. Synthetic peptides derived from this relatively conserved sequence inhibit immune function in vitro and in vivo (By similarity).</text>
</comment>
<comment type="domain">
    <text evidence="1">The YXXL motif is involved in determining the exact site of viral release at the surface of infected mononuclear cells and promotes endocytosis.</text>
</comment>
<comment type="PTM">
    <text evidence="1">Specific enzymatic cleavages in vivo yield mature proteins. Envelope glycoproteins are synthesized as an inactive precursor that is N-glycosylated and processed likely by host cell furin or by a furin-like protease in the Golgi to yield the mature SU and TM proteins. The cleavage site between SU and TM requires the minimal sequence [KR]-X-[KR]-R. The R-peptide is released from the C-terminus of the cytoplasmic tail of the TM protein upon particle formation as a result of proteolytic cleavage by the viral protease. Cleavage of this peptide is required for TM to become fusogenic (By similarity).</text>
</comment>
<comment type="PTM">
    <text evidence="1">The CXXC motif is highly conserved across a broad range of retroviral envelope proteins. It is thought to participate in the formation of a labile disulfide bond possibly with the CX6CC motif present in the transmembrane protein. Isomerization of the intersubunit disulfide bond to an SU intrachain disulfide bond is thought to occur upon receptor recognition in order to allow membrane fusion (By similarity).</text>
</comment>
<comment type="PTM">
    <text evidence="1">The transmembrane protein is palmitoylated.</text>
</comment>
<comment type="PTM">
    <text evidence="1">The R-peptide is palmitoylated.</text>
</comment>
<comment type="sequence caution" evidence="4">
    <conflict type="frameshift">
        <sequence resource="EMBL-CDS" id="AAA46811"/>
    </conflict>
</comment>
<sequence length="685" mass="75837">MVLLPGSMLLTSNLHHLRHQMSPGSWKRLIILLSCVFGGGGTSLQNKNPHQPMTLTWQVLSQTGDVVWDTKAVQPPWTWWPTLKPDVCALAASLESWDIPGTDVSSSKRVRPPDSDYTAAYKQITWGAIGCSYPRARTRMASSTFYVCPRDGRTLSEARRCGGLESLYCKEWDCETTGTGYWLSKSSKDLITVKWDQNSEWTQKFQQCHQTGWCNPLKIDFTDKGKLSKDWITGKTWGLRFYVSGHPGVQFTIRLKITNMPAVAVGPDLVLVEQGPPRTSLALPPPLPPREAPPPSLPDSNSTALATSAQTPTVRKTIVTLNTPPPTTGDRLFDLVQGAFLTLNATNPGATESCWLCLAMGPPYYEAIASSGEVAYSTDLDRCRWGTQGKLTLTEVSGHGLCIGKVPFTHQHLCNQTLSINSSGDHQYLLPSNHSWWACSTGLTPCLSTSVFNQTRDFCIQVQLIPRIYYYPEEVLLQAYDNSHPRTKREAVSLTLAVLLGLGITAGIGTGSTALIKGPIDLQQGLTSLQIAIDADLRALQDSVSKLEDSLTSLSEVVLQNRRGLDLLFLKEGGLCAALKEECCFYIDHSGAVRDSMKKLKEKLDKRQLERQKSQNWYEGWFNNSPWFTTLLSTIAGPLLLLLLLLILGPCIINKLVQFINDRISAVKILVLRQKYQALENEGNL</sequence>
<reference key="1">
    <citation type="journal article" date="1989" name="Virology">
        <title>Genetic organization of gibbon ape leukemia virus.</title>
        <authorList>
            <person name="Delassus S."/>
            <person name="Sonigo P."/>
            <person name="Wain-Hobson S."/>
        </authorList>
    </citation>
    <scope>NUCLEOTIDE SEQUENCE [GENOMIC RNA]</scope>
</reference>
<reference key="2">
    <citation type="journal article" date="1998" name="J. Virol.">
        <title>Simian sarcoma-associated virus fails to infect Chinese hamster cells despite the presence of functional gibbon ape leukemia virus receptors.</title>
        <authorList>
            <person name="Ting Y.T."/>
            <person name="Wilson C.A."/>
            <person name="Farrell K.B."/>
            <person name="Chaudry G.J."/>
            <person name="Eiden M.V."/>
        </authorList>
    </citation>
    <scope>NUCLEOTIDE SEQUENCE [MRNA]</scope>
    <source>
        <strain>SEATO</strain>
    </source>
</reference>
<keyword id="KW-0165">Cleavage on pair of basic residues</keyword>
<keyword id="KW-0175">Coiled coil</keyword>
<keyword id="KW-1015">Disulfide bond</keyword>
<keyword id="KW-1169">Fusion of virus membrane with host cell membrane</keyword>
<keyword id="KW-1168">Fusion of virus membrane with host membrane</keyword>
<keyword id="KW-0325">Glycoprotein</keyword>
<keyword id="KW-1032">Host cell membrane</keyword>
<keyword id="KW-1043">Host membrane</keyword>
<keyword id="KW-0945">Host-virus interaction</keyword>
<keyword id="KW-0449">Lipoprotein</keyword>
<keyword id="KW-0472">Membrane</keyword>
<keyword id="KW-0564">Palmitate</keyword>
<keyword id="KW-0732">Signal</keyword>
<keyword id="KW-0812">Transmembrane</keyword>
<keyword id="KW-1133">Transmembrane helix</keyword>
<keyword id="KW-1161">Viral attachment to host cell</keyword>
<keyword id="KW-0261">Viral envelope protein</keyword>
<keyword id="KW-1162">Viral penetration into host cytoplasm</keyword>
<keyword id="KW-0946">Virion</keyword>
<keyword id="KW-1160">Virus entry into host cell</keyword>
<organism>
    <name type="scientific">Gibbon ape leukemia virus</name>
    <name type="common">GALV</name>
    <dbReference type="NCBI Taxonomy" id="11840"/>
    <lineage>
        <taxon>Viruses</taxon>
        <taxon>Riboviria</taxon>
        <taxon>Pararnavirae</taxon>
        <taxon>Artverviricota</taxon>
        <taxon>Revtraviricetes</taxon>
        <taxon>Ortervirales</taxon>
        <taxon>Retroviridae</taxon>
        <taxon>Orthoretrovirinae</taxon>
        <taxon>Gammaretrovirus</taxon>
    </lineage>
</organism>
<dbReference type="EMBL" id="M26927">
    <property type="protein sequence ID" value="AAA46811.1"/>
    <property type="status" value="ALT_FRAME"/>
    <property type="molecule type" value="Genomic_RNA"/>
</dbReference>
<dbReference type="EMBL" id="AF055060">
    <property type="protein sequence ID" value="AAC96083.1"/>
    <property type="molecule type" value="mRNA"/>
</dbReference>
<dbReference type="PIR" id="C32595">
    <property type="entry name" value="VCLJGL"/>
</dbReference>
<dbReference type="RefSeq" id="NP_056791.2">
    <property type="nucleotide sequence ID" value="NC_001885.2"/>
</dbReference>
<dbReference type="SMR" id="P21415"/>
<dbReference type="GlyCosmos" id="P21415">
    <property type="glycosylation" value="6 sites, No reported glycans"/>
</dbReference>
<dbReference type="KEGG" id="vg:1491895"/>
<dbReference type="OrthoDB" id="1612at10239"/>
<dbReference type="Proteomes" id="UP000008231">
    <property type="component" value="Genome"/>
</dbReference>
<dbReference type="GO" id="GO:0020002">
    <property type="term" value="C:host cell plasma membrane"/>
    <property type="evidence" value="ECO:0007669"/>
    <property type="project" value="UniProtKB-SubCell"/>
</dbReference>
<dbReference type="GO" id="GO:0016020">
    <property type="term" value="C:membrane"/>
    <property type="evidence" value="ECO:0007669"/>
    <property type="project" value="UniProtKB-KW"/>
</dbReference>
<dbReference type="GO" id="GO:0019031">
    <property type="term" value="C:viral envelope"/>
    <property type="evidence" value="ECO:0007669"/>
    <property type="project" value="UniProtKB-KW"/>
</dbReference>
<dbReference type="GO" id="GO:0055036">
    <property type="term" value="C:virion membrane"/>
    <property type="evidence" value="ECO:0007669"/>
    <property type="project" value="UniProtKB-SubCell"/>
</dbReference>
<dbReference type="GO" id="GO:0019064">
    <property type="term" value="P:fusion of virus membrane with host plasma membrane"/>
    <property type="evidence" value="ECO:0007669"/>
    <property type="project" value="UniProtKB-KW"/>
</dbReference>
<dbReference type="GO" id="GO:0046718">
    <property type="term" value="P:symbiont entry into host cell"/>
    <property type="evidence" value="ECO:0007669"/>
    <property type="project" value="UniProtKB-KW"/>
</dbReference>
<dbReference type="GO" id="GO:0019062">
    <property type="term" value="P:virion attachment to host cell"/>
    <property type="evidence" value="ECO:0007669"/>
    <property type="project" value="UniProtKB-KW"/>
</dbReference>
<dbReference type="CDD" id="cd09851">
    <property type="entry name" value="HTLV-1-like_HR1-HR2"/>
    <property type="match status" value="1"/>
</dbReference>
<dbReference type="Gene3D" id="1.10.287.210">
    <property type="match status" value="1"/>
</dbReference>
<dbReference type="Gene3D" id="3.90.310.10">
    <property type="entry name" value="ENV polyprotein, receptor-binding domain"/>
    <property type="match status" value="1"/>
</dbReference>
<dbReference type="InterPro" id="IPR008981">
    <property type="entry name" value="FMuLV_rcpt-bd"/>
</dbReference>
<dbReference type="InterPro" id="IPR018154">
    <property type="entry name" value="TLV/ENV_coat_polyprotein"/>
</dbReference>
<dbReference type="PANTHER" id="PTHR10424:SF82">
    <property type="entry name" value="ENVELOPE GLYCOPROTEIN-RELATED"/>
    <property type="match status" value="1"/>
</dbReference>
<dbReference type="PANTHER" id="PTHR10424">
    <property type="entry name" value="VIRAL ENVELOPE PROTEIN"/>
    <property type="match status" value="1"/>
</dbReference>
<dbReference type="Pfam" id="PF00429">
    <property type="entry name" value="TLV_coat"/>
    <property type="match status" value="1"/>
</dbReference>
<dbReference type="SUPFAM" id="SSF49830">
    <property type="entry name" value="ENV polyprotein, receptor-binding domain"/>
    <property type="match status" value="1"/>
</dbReference>
<dbReference type="SUPFAM" id="SSF58069">
    <property type="entry name" value="Virus ectodomain"/>
    <property type="match status" value="1"/>
</dbReference>
<gene>
    <name type="primary">env</name>
</gene>
<organismHost>
    <name type="scientific">Hylobatidae</name>
    <name type="common">gibbons</name>
    <dbReference type="NCBI Taxonomy" id="9577"/>
</organismHost>
<protein>
    <recommendedName>
        <fullName>Envelope glycoprotein</fullName>
    </recommendedName>
    <alternativeName>
        <fullName>Env polyprotein</fullName>
    </alternativeName>
    <component>
        <recommendedName>
            <fullName>Surface protein</fullName>
            <shortName>SU</shortName>
        </recommendedName>
        <alternativeName>
            <fullName>Glycoprotein 70</fullName>
            <shortName>gp70</shortName>
        </alternativeName>
    </component>
    <component>
        <recommendedName>
            <fullName>Transmembrane protein</fullName>
            <shortName>TM</shortName>
        </recommendedName>
        <alternativeName>
            <fullName>Envelope protein p15E</fullName>
        </alternativeName>
    </component>
    <component>
        <recommendedName>
            <fullName>R-peptide</fullName>
        </recommendedName>
        <alternativeName>
            <fullName>p2E</fullName>
        </alternativeName>
    </component>
</protein>
<accession>P21415</accession>
<accession>Q9YWM3</accession>
<evidence type="ECO:0000250" key="1"/>
<evidence type="ECO:0000255" key="2"/>
<evidence type="ECO:0000256" key="3">
    <source>
        <dbReference type="SAM" id="MobiDB-lite"/>
    </source>
</evidence>
<evidence type="ECO:0000305" key="4"/>
<proteinExistence type="evidence at transcript level"/>
<feature type="signal peptide" evidence="2">
    <location>
        <begin position="1"/>
        <end position="41"/>
    </location>
</feature>
<feature type="chain" id="PRO_0000239575" description="Envelope glycoprotein">
    <location>
        <begin position="42"/>
        <end position="685"/>
    </location>
</feature>
<feature type="chain" id="PRO_0000040731" description="Surface protein" evidence="1">
    <location>
        <begin position="42"/>
        <end position="489"/>
    </location>
</feature>
<feature type="chain" id="PRO_0000040732" description="Transmembrane protein" evidence="1">
    <location>
        <begin position="490"/>
        <end position="670"/>
    </location>
</feature>
<feature type="peptide" id="PRO_0000239576" description="R-peptide" evidence="1">
    <location>
        <begin position="671"/>
        <end position="685"/>
    </location>
</feature>
<feature type="topological domain" description="Extracellular" evidence="2">
    <location>
        <begin position="42"/>
        <end position="632"/>
    </location>
</feature>
<feature type="transmembrane region" description="Helical" evidence="2">
    <location>
        <begin position="633"/>
        <end position="653"/>
    </location>
</feature>
<feature type="topological domain" description="Cytoplasmic" evidence="2">
    <location>
        <begin position="654"/>
        <end position="685"/>
    </location>
</feature>
<feature type="region of interest" description="Disordered" evidence="3">
    <location>
        <begin position="276"/>
        <end position="309"/>
    </location>
</feature>
<feature type="region of interest" description="Fusion peptide" evidence="1">
    <location>
        <begin position="492"/>
        <end position="512"/>
    </location>
</feature>
<feature type="region of interest" description="Immunosuppression" evidence="1">
    <location>
        <begin position="559"/>
        <end position="575"/>
    </location>
</feature>
<feature type="coiled-coil region" evidence="2">
    <location>
        <begin position="520"/>
        <end position="570"/>
    </location>
</feature>
<feature type="coiled-coil region" evidence="2">
    <location>
        <begin position="580"/>
        <end position="616"/>
    </location>
</feature>
<feature type="short sequence motif" description="CXXC">
    <location>
        <begin position="354"/>
        <end position="357"/>
    </location>
</feature>
<feature type="short sequence motif" description="CX6CC">
    <location>
        <begin position="576"/>
        <end position="584"/>
    </location>
</feature>
<feature type="short sequence motif" description="YXXL motif; contains endocytosis signal" evidence="1">
    <location>
        <begin position="676"/>
        <end position="679"/>
    </location>
</feature>
<feature type="compositionally biased region" description="Pro residues" evidence="3">
    <location>
        <begin position="283"/>
        <end position="297"/>
    </location>
</feature>
<feature type="compositionally biased region" description="Polar residues" evidence="3">
    <location>
        <begin position="299"/>
        <end position="309"/>
    </location>
</feature>
<feature type="site" description="Cleavage; by host" evidence="1">
    <location>
        <begin position="489"/>
        <end position="490"/>
    </location>
</feature>
<feature type="site" description="Cleavage; by viral protease" evidence="1">
    <location>
        <begin position="669"/>
        <end position="670"/>
    </location>
</feature>
<feature type="lipid moiety-binding region" description="S-palmitoyl cysteine; by host" evidence="1">
    <location>
        <position position="651"/>
    </location>
</feature>
<feature type="glycosylation site" description="N-linked (GlcNAc...) asparagine; by host" evidence="2">
    <location>
        <position position="301"/>
    </location>
</feature>
<feature type="glycosylation site" description="N-linked (GlcNAc...) asparagine; by host" evidence="2">
    <location>
        <position position="344"/>
    </location>
</feature>
<feature type="glycosylation site" description="N-linked (GlcNAc...) asparagine; by host" evidence="2">
    <location>
        <position position="415"/>
    </location>
</feature>
<feature type="glycosylation site" description="N-linked (GlcNAc...) asparagine; by host" evidence="2">
    <location>
        <position position="421"/>
    </location>
</feature>
<feature type="glycosylation site" description="N-linked (GlcNAc...) asparagine; by host" evidence="2">
    <location>
        <position position="433"/>
    </location>
</feature>
<feature type="glycosylation site" description="N-linked (GlcNAc...) asparagine; by host" evidence="2">
    <location>
        <position position="453"/>
    </location>
</feature>
<feature type="disulfide bond" evidence="1">
    <location>
        <begin position="148"/>
        <end position="169"/>
    </location>
</feature>
<feature type="disulfide bond" evidence="1">
    <location>
        <begin position="161"/>
        <end position="174"/>
    </location>
</feature>
<feature type="disulfide bond" description="Interchain (between SU and TM chains, or C-357 with C-584); in linked form" evidence="1">
    <location>
        <begin position="354"/>
        <end position="584"/>
    </location>
</feature>
<feature type="disulfide bond" evidence="1">
    <location>
        <begin position="354"/>
        <end position="357"/>
    </location>
</feature>
<feature type="disulfide bond" evidence="1">
    <location>
        <begin position="576"/>
        <end position="583"/>
    </location>
</feature>
<name>ENV_GALV</name>